<proteinExistence type="inferred from homology"/>
<reference key="1">
    <citation type="journal article" date="2005" name="Nature">
        <title>Genome sequencing and analysis of Aspergillus oryzae.</title>
        <authorList>
            <person name="Machida M."/>
            <person name="Asai K."/>
            <person name="Sano M."/>
            <person name="Tanaka T."/>
            <person name="Kumagai T."/>
            <person name="Terai G."/>
            <person name="Kusumoto K."/>
            <person name="Arima T."/>
            <person name="Akita O."/>
            <person name="Kashiwagi Y."/>
            <person name="Abe K."/>
            <person name="Gomi K."/>
            <person name="Horiuchi H."/>
            <person name="Kitamoto K."/>
            <person name="Kobayashi T."/>
            <person name="Takeuchi M."/>
            <person name="Denning D.W."/>
            <person name="Galagan J.E."/>
            <person name="Nierman W.C."/>
            <person name="Yu J."/>
            <person name="Archer D.B."/>
            <person name="Bennett J.W."/>
            <person name="Bhatnagar D."/>
            <person name="Cleveland T.E."/>
            <person name="Fedorova N.D."/>
            <person name="Gotoh O."/>
            <person name="Horikawa H."/>
            <person name="Hosoyama A."/>
            <person name="Ichinomiya M."/>
            <person name="Igarashi R."/>
            <person name="Iwashita K."/>
            <person name="Juvvadi P.R."/>
            <person name="Kato M."/>
            <person name="Kato Y."/>
            <person name="Kin T."/>
            <person name="Kokubun A."/>
            <person name="Maeda H."/>
            <person name="Maeyama N."/>
            <person name="Maruyama J."/>
            <person name="Nagasaki H."/>
            <person name="Nakajima T."/>
            <person name="Oda K."/>
            <person name="Okada K."/>
            <person name="Paulsen I."/>
            <person name="Sakamoto K."/>
            <person name="Sawano T."/>
            <person name="Takahashi M."/>
            <person name="Takase K."/>
            <person name="Terabayashi Y."/>
            <person name="Wortman J.R."/>
            <person name="Yamada O."/>
            <person name="Yamagata Y."/>
            <person name="Anazawa H."/>
            <person name="Hata Y."/>
            <person name="Koide Y."/>
            <person name="Komori T."/>
            <person name="Koyama Y."/>
            <person name="Minetoki T."/>
            <person name="Suharnan S."/>
            <person name="Tanaka A."/>
            <person name="Isono K."/>
            <person name="Kuhara S."/>
            <person name="Ogasawara N."/>
            <person name="Kikuchi H."/>
        </authorList>
    </citation>
    <scope>NUCLEOTIDE SEQUENCE [LARGE SCALE GENOMIC DNA]</scope>
    <source>
        <strain>ATCC 42149 / RIB 40</strain>
    </source>
</reference>
<evidence type="ECO:0000250" key="1"/>
<evidence type="ECO:0000255" key="2"/>
<evidence type="ECO:0000255" key="3">
    <source>
        <dbReference type="PROSITE-ProRule" id="PRU00541"/>
    </source>
</evidence>
<evidence type="ECO:0000255" key="4">
    <source>
        <dbReference type="PROSITE-ProRule" id="PRU00542"/>
    </source>
</evidence>
<evidence type="ECO:0000256" key="5">
    <source>
        <dbReference type="SAM" id="MobiDB-lite"/>
    </source>
</evidence>
<evidence type="ECO:0000305" key="6"/>
<organism>
    <name type="scientific">Aspergillus oryzae (strain ATCC 42149 / RIB 40)</name>
    <name type="common">Yellow koji mold</name>
    <dbReference type="NCBI Taxonomy" id="510516"/>
    <lineage>
        <taxon>Eukaryota</taxon>
        <taxon>Fungi</taxon>
        <taxon>Dikarya</taxon>
        <taxon>Ascomycota</taxon>
        <taxon>Pezizomycotina</taxon>
        <taxon>Eurotiomycetes</taxon>
        <taxon>Eurotiomycetidae</taxon>
        <taxon>Eurotiales</taxon>
        <taxon>Aspergillaceae</taxon>
        <taxon>Aspergillus</taxon>
        <taxon>Aspergillus subgen. Circumdati</taxon>
    </lineage>
</organism>
<name>MS116_ASPOR</name>
<feature type="transit peptide" description="Mitochondrion" evidence="2">
    <location>
        <begin position="1"/>
        <end position="32"/>
    </location>
</feature>
<feature type="chain" id="PRO_0000256009" description="ATP-dependent RNA helicase mss116, mitochondrial">
    <location>
        <begin position="33"/>
        <end position="633"/>
    </location>
</feature>
<feature type="domain" description="Helicase ATP-binding" evidence="3">
    <location>
        <begin position="70"/>
        <end position="248"/>
    </location>
</feature>
<feature type="domain" description="Helicase C-terminal" evidence="4">
    <location>
        <begin position="262"/>
        <end position="429"/>
    </location>
</feature>
<feature type="region of interest" description="Disordered" evidence="5">
    <location>
        <begin position="567"/>
        <end position="633"/>
    </location>
</feature>
<feature type="short sequence motif" description="Q motif">
    <location>
        <begin position="38"/>
        <end position="66"/>
    </location>
</feature>
<feature type="short sequence motif" description="DEAD box">
    <location>
        <begin position="195"/>
        <end position="198"/>
    </location>
</feature>
<feature type="binding site" evidence="3">
    <location>
        <begin position="83"/>
        <end position="90"/>
    </location>
    <ligand>
        <name>ATP</name>
        <dbReference type="ChEBI" id="CHEBI:30616"/>
    </ligand>
</feature>
<protein>
    <recommendedName>
        <fullName>ATP-dependent RNA helicase mss116, mitochondrial</fullName>
        <ecNumber>3.6.4.13</ecNumber>
    </recommendedName>
</protein>
<dbReference type="EC" id="3.6.4.13"/>
<dbReference type="EMBL" id="BA000049">
    <property type="protein sequence ID" value="BAE55384.1"/>
    <property type="molecule type" value="Genomic_DNA"/>
</dbReference>
<dbReference type="SMR" id="Q2UST1"/>
<dbReference type="STRING" id="510516.Q2UST1"/>
<dbReference type="EnsemblFungi" id="BAE55384">
    <property type="protein sequence ID" value="BAE55384"/>
    <property type="gene ID" value="AO090005000305"/>
</dbReference>
<dbReference type="VEuPathDB" id="FungiDB:AO090005000305"/>
<dbReference type="HOGENOM" id="CLU_003041_26_6_1"/>
<dbReference type="OMA" id="NGEQYVH"/>
<dbReference type="Proteomes" id="UP000006564">
    <property type="component" value="Chromosome 1"/>
</dbReference>
<dbReference type="GO" id="GO:0005759">
    <property type="term" value="C:mitochondrial matrix"/>
    <property type="evidence" value="ECO:0007669"/>
    <property type="project" value="UniProtKB-SubCell"/>
</dbReference>
<dbReference type="GO" id="GO:0005524">
    <property type="term" value="F:ATP binding"/>
    <property type="evidence" value="ECO:0007669"/>
    <property type="project" value="UniProtKB-KW"/>
</dbReference>
<dbReference type="GO" id="GO:0016887">
    <property type="term" value="F:ATP hydrolysis activity"/>
    <property type="evidence" value="ECO:0007669"/>
    <property type="project" value="RHEA"/>
</dbReference>
<dbReference type="GO" id="GO:0003723">
    <property type="term" value="F:RNA binding"/>
    <property type="evidence" value="ECO:0007669"/>
    <property type="project" value="UniProtKB-KW"/>
</dbReference>
<dbReference type="GO" id="GO:0003724">
    <property type="term" value="F:RNA helicase activity"/>
    <property type="evidence" value="ECO:0007669"/>
    <property type="project" value="UniProtKB-EC"/>
</dbReference>
<dbReference type="GO" id="GO:0006397">
    <property type="term" value="P:mRNA processing"/>
    <property type="evidence" value="ECO:0007669"/>
    <property type="project" value="UniProtKB-KW"/>
</dbReference>
<dbReference type="GO" id="GO:0006417">
    <property type="term" value="P:regulation of translation"/>
    <property type="evidence" value="ECO:0007669"/>
    <property type="project" value="UniProtKB-KW"/>
</dbReference>
<dbReference type="GO" id="GO:0008380">
    <property type="term" value="P:RNA splicing"/>
    <property type="evidence" value="ECO:0007669"/>
    <property type="project" value="UniProtKB-KW"/>
</dbReference>
<dbReference type="CDD" id="cd17964">
    <property type="entry name" value="DEADc_MSS116"/>
    <property type="match status" value="1"/>
</dbReference>
<dbReference type="CDD" id="cd18787">
    <property type="entry name" value="SF2_C_DEAD"/>
    <property type="match status" value="1"/>
</dbReference>
<dbReference type="Gene3D" id="3.40.50.300">
    <property type="entry name" value="P-loop containing nucleotide triphosphate hydrolases"/>
    <property type="match status" value="2"/>
</dbReference>
<dbReference type="InterPro" id="IPR011545">
    <property type="entry name" value="DEAD/DEAH_box_helicase_dom"/>
</dbReference>
<dbReference type="InterPro" id="IPR014001">
    <property type="entry name" value="Helicase_ATP-bd"/>
</dbReference>
<dbReference type="InterPro" id="IPR001650">
    <property type="entry name" value="Helicase_C-like"/>
</dbReference>
<dbReference type="InterPro" id="IPR027417">
    <property type="entry name" value="P-loop_NTPase"/>
</dbReference>
<dbReference type="PANTHER" id="PTHR24031">
    <property type="entry name" value="RNA HELICASE"/>
    <property type="match status" value="1"/>
</dbReference>
<dbReference type="Pfam" id="PF00270">
    <property type="entry name" value="DEAD"/>
    <property type="match status" value="1"/>
</dbReference>
<dbReference type="Pfam" id="PF00271">
    <property type="entry name" value="Helicase_C"/>
    <property type="match status" value="1"/>
</dbReference>
<dbReference type="SMART" id="SM00487">
    <property type="entry name" value="DEXDc"/>
    <property type="match status" value="1"/>
</dbReference>
<dbReference type="SMART" id="SM00490">
    <property type="entry name" value="HELICc"/>
    <property type="match status" value="1"/>
</dbReference>
<dbReference type="SUPFAM" id="SSF52540">
    <property type="entry name" value="P-loop containing nucleoside triphosphate hydrolases"/>
    <property type="match status" value="2"/>
</dbReference>
<dbReference type="PROSITE" id="PS51192">
    <property type="entry name" value="HELICASE_ATP_BIND_1"/>
    <property type="match status" value="1"/>
</dbReference>
<dbReference type="PROSITE" id="PS51194">
    <property type="entry name" value="HELICASE_CTER"/>
    <property type="match status" value="1"/>
</dbReference>
<dbReference type="PROSITE" id="PS51195">
    <property type="entry name" value="Q_MOTIF"/>
    <property type="match status" value="1"/>
</dbReference>
<comment type="function">
    <text evidence="1">ATP-dependent RNA helicase required for mitochondrial splicing of group I and II introns. Also required for efficient mitochondrial translation (By similarity).</text>
</comment>
<comment type="catalytic activity">
    <reaction>
        <text>ATP + H2O = ADP + phosphate + H(+)</text>
        <dbReference type="Rhea" id="RHEA:13065"/>
        <dbReference type="ChEBI" id="CHEBI:15377"/>
        <dbReference type="ChEBI" id="CHEBI:15378"/>
        <dbReference type="ChEBI" id="CHEBI:30616"/>
        <dbReference type="ChEBI" id="CHEBI:43474"/>
        <dbReference type="ChEBI" id="CHEBI:456216"/>
        <dbReference type="EC" id="3.6.4.13"/>
    </reaction>
</comment>
<comment type="subcellular location">
    <subcellularLocation>
        <location evidence="1">Mitochondrion matrix</location>
    </subcellularLocation>
</comment>
<comment type="domain">
    <text>The Q motif is unique to and characteristic of the DEAD box family of RNA helicases and controls ATP binding and hydrolysis.</text>
</comment>
<comment type="similarity">
    <text evidence="6">Belongs to the DEAD box helicase family. DDX18/HAS1 subfamily.</text>
</comment>
<sequence length="633" mass="68795">MKTGRTRPLRVFDILVPPWPPTVPHRIKLPRGKTNWFEFYSAITRNWNKLKGLKNCWQIWKDVQEIIRRIRKYQGESTVMQGPGNNDGAHPYATMAGKLDSKLLQALKVMEFEYMTPVQHRVLTELPSWRSDCLVQAKTGTGKTLAFLLPTLHCLLQGHSAPPRGQVAILIITPTRELAQQIAKSCDQLTSQLARPLECHIAVGGTARASALARFMKGAPSILVATPGRLKDYLSEPSTAEKLSNIQTLILDEADTMLESGFLADVKRILQLIPPKSTGWQGMCFSATVPPKVKDVVSVVLKPGYTSISTIEKNETPTHERVPQYHVLIPSVADTFTTLASLLNLEIKNSSKIIVFGVTANMVALFAAAFSQGLTPLKVFEIHSRLSQSARTKTTALFKEAATGIMFASDVIGRGMDFPNVDLVIQVGLPSNGEQYVHRVGRTARAGNDGRAIILLTEAESFFMKVNRHLPIQPHPQTDAINAGASSCADAVTKAMYSIGEETKQRAYSSYIGFFAGSGLLKQVRLDKPGLVQLANELAIQGMGCPEPPPMDKKVVGKMGLKGVPGFNYATGNDLNGDRPARPRGRPGNKTRDVLSPGAGQGDRRGSVSKNRGGRRGGGRGGRGGRGGKPRAA</sequence>
<gene>
    <name type="primary">mss116</name>
    <name type="ORF">AO090005000305</name>
</gene>
<accession>Q2UST1</accession>
<keyword id="KW-0067">ATP-binding</keyword>
<keyword id="KW-0347">Helicase</keyword>
<keyword id="KW-0378">Hydrolase</keyword>
<keyword id="KW-0496">Mitochondrion</keyword>
<keyword id="KW-0507">mRNA processing</keyword>
<keyword id="KW-0508">mRNA splicing</keyword>
<keyword id="KW-0547">Nucleotide-binding</keyword>
<keyword id="KW-1185">Reference proteome</keyword>
<keyword id="KW-0694">RNA-binding</keyword>
<keyword id="KW-0809">Transit peptide</keyword>
<keyword id="KW-0810">Translation regulation</keyword>